<keyword id="KW-0963">Cytoplasm</keyword>
<keyword id="KW-0378">Hydrolase</keyword>
<keyword id="KW-0645">Protease</keyword>
<keyword id="KW-1185">Reference proteome</keyword>
<keyword id="KW-0788">Thiol protease</keyword>
<feature type="chain" id="PRO_0000184729" description="Pyrrolidone-carboxylate peptidase 1">
    <location>
        <begin position="1"/>
        <end position="215"/>
    </location>
</feature>
<feature type="active site" evidence="1">
    <location>
        <position position="80"/>
    </location>
</feature>
<feature type="active site" evidence="1">
    <location>
        <position position="143"/>
    </location>
</feature>
<feature type="active site" evidence="1">
    <location>
        <position position="167"/>
    </location>
</feature>
<proteinExistence type="inferred from homology"/>
<organism>
    <name type="scientific">Ralstonia nicotianae (strain ATCC BAA-1114 / GMI1000)</name>
    <name type="common">Ralstonia solanacearum</name>
    <dbReference type="NCBI Taxonomy" id="267608"/>
    <lineage>
        <taxon>Bacteria</taxon>
        <taxon>Pseudomonadati</taxon>
        <taxon>Pseudomonadota</taxon>
        <taxon>Betaproteobacteria</taxon>
        <taxon>Burkholderiales</taxon>
        <taxon>Burkholderiaceae</taxon>
        <taxon>Ralstonia</taxon>
        <taxon>Ralstonia solanacearum species complex</taxon>
    </lineage>
</organism>
<comment type="function">
    <text evidence="1">Removes 5-oxoproline from various penultimate amino acid residues except L-proline.</text>
</comment>
<comment type="catalytic activity">
    <reaction evidence="1">
        <text>Release of an N-terminal pyroglutamyl group from a polypeptide, the second amino acid generally not being Pro.</text>
        <dbReference type="EC" id="3.4.19.3"/>
    </reaction>
</comment>
<comment type="subunit">
    <text evidence="1">Homotetramer.</text>
</comment>
<comment type="subcellular location">
    <subcellularLocation>
        <location evidence="1">Cytoplasm</location>
    </subcellularLocation>
</comment>
<comment type="similarity">
    <text evidence="1">Belongs to the peptidase C15 family.</text>
</comment>
<gene>
    <name evidence="1" type="primary">pcp1</name>
    <name type="ordered locus">RSc2165</name>
    <name type="ORF">RS01434</name>
</gene>
<name>PCP1_RALN1</name>
<accession>Q8XXE9</accession>
<evidence type="ECO:0000255" key="1">
    <source>
        <dbReference type="HAMAP-Rule" id="MF_00417"/>
    </source>
</evidence>
<protein>
    <recommendedName>
        <fullName evidence="1">Pyrrolidone-carboxylate peptidase 1</fullName>
        <ecNumber evidence="1">3.4.19.3</ecNumber>
    </recommendedName>
    <alternativeName>
        <fullName evidence="1">5-oxoprolyl-peptidase 1</fullName>
    </alternativeName>
    <alternativeName>
        <fullName evidence="1">Pyroglutamyl-peptidase I 1</fullName>
        <shortName evidence="1">PGP-I 1</shortName>
        <shortName evidence="1">Pyrase 1</shortName>
    </alternativeName>
</protein>
<reference key="1">
    <citation type="journal article" date="2002" name="Nature">
        <title>Genome sequence of the plant pathogen Ralstonia solanacearum.</title>
        <authorList>
            <person name="Salanoubat M."/>
            <person name="Genin S."/>
            <person name="Artiguenave F."/>
            <person name="Gouzy J."/>
            <person name="Mangenot S."/>
            <person name="Arlat M."/>
            <person name="Billault A."/>
            <person name="Brottier P."/>
            <person name="Camus J.-C."/>
            <person name="Cattolico L."/>
            <person name="Chandler M."/>
            <person name="Choisne N."/>
            <person name="Claudel-Renard C."/>
            <person name="Cunnac S."/>
            <person name="Demange N."/>
            <person name="Gaspin C."/>
            <person name="Lavie M."/>
            <person name="Moisan A."/>
            <person name="Robert C."/>
            <person name="Saurin W."/>
            <person name="Schiex T."/>
            <person name="Siguier P."/>
            <person name="Thebault P."/>
            <person name="Whalen M."/>
            <person name="Wincker P."/>
            <person name="Levy M."/>
            <person name="Weissenbach J."/>
            <person name="Boucher C.A."/>
        </authorList>
    </citation>
    <scope>NUCLEOTIDE SEQUENCE [LARGE SCALE GENOMIC DNA]</scope>
    <source>
        <strain>ATCC BAA-1114 / GMI1000</strain>
    </source>
</reference>
<sequence>MPTVLVTGFDPFENEPVNPSWEAVRTLDGQGIAGADIVTRQLPTVFGESIRVLDRLLMSLRPDVVIAVGQAGGRAEMAIERVAINVDDARIADNAGRQPIDTAIVAGGPAAYFSTLPIKAIVHELRAAGVPASVSQTAGTFVCNHVFYGLMHAIAHHGLHARGGFIHIPYLPAQAAGHPGQPSMAHDTVVAGLRIAIETTLRRQEDIREAGGQLH</sequence>
<dbReference type="EC" id="3.4.19.3" evidence="1"/>
<dbReference type="EMBL" id="AL646052">
    <property type="protein sequence ID" value="CAD15872.1"/>
    <property type="molecule type" value="Genomic_DNA"/>
</dbReference>
<dbReference type="SMR" id="Q8XXE9"/>
<dbReference type="STRING" id="267608.RSc2165"/>
<dbReference type="MEROPS" id="C15.001"/>
<dbReference type="EnsemblBacteria" id="CAD15872">
    <property type="protein sequence ID" value="CAD15872"/>
    <property type="gene ID" value="RSc2165"/>
</dbReference>
<dbReference type="KEGG" id="rso:RSc2165"/>
<dbReference type="eggNOG" id="COG2039">
    <property type="taxonomic scope" value="Bacteria"/>
</dbReference>
<dbReference type="HOGENOM" id="CLU_043960_4_0_4"/>
<dbReference type="Proteomes" id="UP000001436">
    <property type="component" value="Chromosome"/>
</dbReference>
<dbReference type="GO" id="GO:0005829">
    <property type="term" value="C:cytosol"/>
    <property type="evidence" value="ECO:0007669"/>
    <property type="project" value="InterPro"/>
</dbReference>
<dbReference type="GO" id="GO:0016920">
    <property type="term" value="F:pyroglutamyl-peptidase activity"/>
    <property type="evidence" value="ECO:0007669"/>
    <property type="project" value="UniProtKB-UniRule"/>
</dbReference>
<dbReference type="GO" id="GO:0006508">
    <property type="term" value="P:proteolysis"/>
    <property type="evidence" value="ECO:0007669"/>
    <property type="project" value="UniProtKB-KW"/>
</dbReference>
<dbReference type="CDD" id="cd00501">
    <property type="entry name" value="Peptidase_C15"/>
    <property type="match status" value="1"/>
</dbReference>
<dbReference type="FunFam" id="3.40.630.20:FF:000001">
    <property type="entry name" value="Pyrrolidone-carboxylate peptidase"/>
    <property type="match status" value="1"/>
</dbReference>
<dbReference type="Gene3D" id="3.40.630.20">
    <property type="entry name" value="Peptidase C15, pyroglutamyl peptidase I-like"/>
    <property type="match status" value="1"/>
</dbReference>
<dbReference type="HAMAP" id="MF_00417">
    <property type="entry name" value="Pyrrolid_peptidase"/>
    <property type="match status" value="1"/>
</dbReference>
<dbReference type="InterPro" id="IPR000816">
    <property type="entry name" value="Peptidase_C15"/>
</dbReference>
<dbReference type="InterPro" id="IPR016125">
    <property type="entry name" value="Peptidase_C15-like"/>
</dbReference>
<dbReference type="InterPro" id="IPR036440">
    <property type="entry name" value="Peptidase_C15-like_sf"/>
</dbReference>
<dbReference type="InterPro" id="IPR029762">
    <property type="entry name" value="PGP-I_bact-type"/>
</dbReference>
<dbReference type="InterPro" id="IPR033694">
    <property type="entry name" value="PGPEP1_Cys_AS"/>
</dbReference>
<dbReference type="NCBIfam" id="NF009676">
    <property type="entry name" value="PRK13197.1"/>
    <property type="match status" value="1"/>
</dbReference>
<dbReference type="NCBIfam" id="TIGR00504">
    <property type="entry name" value="pyro_pdase"/>
    <property type="match status" value="1"/>
</dbReference>
<dbReference type="PANTHER" id="PTHR23402">
    <property type="entry name" value="PROTEASE FAMILY C15 PYROGLUTAMYL-PEPTIDASE I-RELATED"/>
    <property type="match status" value="1"/>
</dbReference>
<dbReference type="PANTHER" id="PTHR23402:SF1">
    <property type="entry name" value="PYROGLUTAMYL-PEPTIDASE I"/>
    <property type="match status" value="1"/>
</dbReference>
<dbReference type="Pfam" id="PF01470">
    <property type="entry name" value="Peptidase_C15"/>
    <property type="match status" value="1"/>
</dbReference>
<dbReference type="PIRSF" id="PIRSF015592">
    <property type="entry name" value="Prld-crbxl_pptds"/>
    <property type="match status" value="1"/>
</dbReference>
<dbReference type="PRINTS" id="PR00706">
    <property type="entry name" value="PYROGLUPTASE"/>
</dbReference>
<dbReference type="SUPFAM" id="SSF53182">
    <property type="entry name" value="Pyrrolidone carboxyl peptidase (pyroglutamate aminopeptidase)"/>
    <property type="match status" value="1"/>
</dbReference>
<dbReference type="PROSITE" id="PS01334">
    <property type="entry name" value="PYRASE_CYS"/>
    <property type="match status" value="1"/>
</dbReference>